<accession>C6C2E5</accession>
<accession>O50918</accession>
<accession>O52611</accession>
<keyword id="KW-0614">Plasmid</keyword>
<keyword id="KW-0732">Signal</keyword>
<feature type="signal peptide" evidence="1">
    <location>
        <begin position="1"/>
        <end position="20"/>
    </location>
</feature>
<feature type="chain" id="PRO_0000406315" description="Decorin-binding protein B">
    <location>
        <begin position="21"/>
        <end position="187"/>
    </location>
</feature>
<sequence length="187" mass="20431">MKIGKLNSIVMVLFFDLLVACSIGLVERTNAALESSSKDLKNKILKIKKEATGKGVLFEAFTGLKTGSKVTSGGLALREAKVQAIVETGKFLKIIEEEALKLKETGNSGQFLAMFDLMLEVVESLEDVGIIGLKARVLEESKNNPINTAERLLAAKAQIENQLKVVKEKQNIENGGEKKNNKSKKKK</sequence>
<dbReference type="EMBL" id="U69553">
    <property type="protein sequence ID" value="AAC18819.1"/>
    <property type="molecule type" value="Genomic_DNA"/>
</dbReference>
<dbReference type="EMBL" id="AF005052">
    <property type="protein sequence ID" value="AAD01214.1"/>
    <property type="molecule type" value="Genomic_DNA"/>
</dbReference>
<dbReference type="EMBL" id="AF042796">
    <property type="protein sequence ID" value="AAC18824.1"/>
    <property type="molecule type" value="Genomic_DNA"/>
</dbReference>
<dbReference type="EMBL" id="CP001651">
    <property type="protein sequence ID" value="ACS94774.1"/>
    <property type="molecule type" value="Genomic_DNA"/>
</dbReference>
<dbReference type="RefSeq" id="WP_010258353.1">
    <property type="nucleotide sequence ID" value="NC_013130.1"/>
</dbReference>
<dbReference type="BMRB" id="C6C2E5"/>
<dbReference type="SMR" id="C6C2E5"/>
<dbReference type="KEGG" id="bbn:BbuN40_A25"/>
<dbReference type="HOGENOM" id="CLU_124841_0_0_12"/>
<dbReference type="Gene3D" id="1.20.1420.40">
    <property type="entry name" value="Decorin-binding protein"/>
    <property type="match status" value="1"/>
</dbReference>
<dbReference type="InterPro" id="IPR003332">
    <property type="entry name" value="Decorin-bd"/>
</dbReference>
<dbReference type="InterPro" id="IPR053514">
    <property type="entry name" value="Decorin-Binding"/>
</dbReference>
<dbReference type="InterPro" id="IPR038353">
    <property type="entry name" value="Decorin-db_sf"/>
</dbReference>
<dbReference type="NCBIfam" id="NF033720">
    <property type="entry name" value="DbpB"/>
    <property type="match status" value="1"/>
</dbReference>
<dbReference type="Pfam" id="PF02352">
    <property type="entry name" value="Decorin_bind"/>
    <property type="match status" value="1"/>
</dbReference>
<proteinExistence type="inferred from homology"/>
<protein>
    <recommendedName>
        <fullName>Decorin-binding protein B</fullName>
    </recommendedName>
</protein>
<comment type="function">
    <text>Binds to decorin which may mediate the adherence of B.burgdorferi to collagen fibers in skin and other tissues.</text>
</comment>
<comment type="similarity">
    <text evidence="2">Belongs to the decorin-binding protein family.</text>
</comment>
<geneLocation type="plasmid">
    <name>lp54</name>
</geneLocation>
<geneLocation type="plasmid">
    <name>N40_lp54</name>
</geneLocation>
<gene>
    <name type="primary">dbpB</name>
    <name type="ordered locus">BbuN40_A25</name>
</gene>
<evidence type="ECO:0000255" key="1"/>
<evidence type="ECO:0000305" key="2"/>
<reference key="1">
    <citation type="journal article" date="1998" name="Infect. Immun.">
        <title>Humoral immunity to Borrelia burgdorferi N40 decorin binding proteins during infection of laboratory mice.</title>
        <authorList>
            <person name="Feng S."/>
            <person name="Hodzic E."/>
            <person name="Stevenson B."/>
            <person name="Barthold S.W."/>
        </authorList>
    </citation>
    <scope>NUCLEOTIDE SEQUENCE [GENOMIC DNA]</scope>
    <source>
        <strain>N40</strain>
        <plasmid>lp54</plasmid>
    </source>
</reference>
<reference key="2">
    <citation type="journal article" date="2000" name="Infect. Immun.">
        <title>Decorin-binding protein A (DbpA) of Borrelia burgdorferi is not protective when immunized mice are challenged via tick infestation and correlates with the lack of DbpA expression by B. burgdorferi in ticks.</title>
        <authorList>
            <person name="Hagman K.E."/>
            <person name="Yang X."/>
            <person name="Wikel S.K."/>
            <person name="Schoeler G.B."/>
            <person name="Caimano M.J."/>
            <person name="Radolf J.D."/>
            <person name="Norgard M.V."/>
        </authorList>
    </citation>
    <scope>NUCLEOTIDE SEQUENCE [GENOMIC DNA]</scope>
    <source>
        <strain>N40</strain>
        <plasmid>lp54</plasmid>
    </source>
</reference>
<reference key="3">
    <citation type="journal article" date="2011" name="J. Bacteriol.">
        <title>Whole-genome sequences of thirteen isolates of Borrelia burgdorferi.</title>
        <authorList>
            <person name="Schutzer S.E."/>
            <person name="Fraser-Liggett C.M."/>
            <person name="Casjens S.R."/>
            <person name="Qiu W.G."/>
            <person name="Dunn J.J."/>
            <person name="Mongodin E.F."/>
            <person name="Luft B.J."/>
        </authorList>
    </citation>
    <scope>NUCLEOTIDE SEQUENCE [LARGE SCALE GENOMIC DNA]</scope>
    <source>
        <strain>N40</strain>
        <plasmid>N40_lp54</plasmid>
    </source>
</reference>
<name>DBPB_BORBN</name>
<organism>
    <name type="scientific">Borreliella burgdorferi (strain N40)</name>
    <name type="common">Borrelia burgdorferi</name>
    <dbReference type="NCBI Taxonomy" id="521007"/>
    <lineage>
        <taxon>Bacteria</taxon>
        <taxon>Pseudomonadati</taxon>
        <taxon>Spirochaetota</taxon>
        <taxon>Spirochaetia</taxon>
        <taxon>Spirochaetales</taxon>
        <taxon>Borreliaceae</taxon>
        <taxon>Borreliella</taxon>
    </lineage>
</organism>